<evidence type="ECO:0000255" key="1">
    <source>
        <dbReference type="PROSITE-ProRule" id="PRU00416"/>
    </source>
</evidence>
<evidence type="ECO:0000255" key="2">
    <source>
        <dbReference type="PROSITE-ProRule" id="PRU00421"/>
    </source>
</evidence>
<evidence type="ECO:0000255" key="3">
    <source>
        <dbReference type="PROSITE-ProRule" id="PRU00426"/>
    </source>
</evidence>
<evidence type="ECO:0000269" key="4">
    <source>
    </source>
</evidence>
<evidence type="ECO:0000269" key="5">
    <source>
    </source>
</evidence>
<evidence type="ECO:0000303" key="6">
    <source>
    </source>
</evidence>
<evidence type="ECO:0000305" key="7"/>
<evidence type="ECO:0000305" key="8">
    <source>
    </source>
</evidence>
<keyword id="KW-1003">Cell membrane</keyword>
<keyword id="KW-0903">Direct protein sequencing</keyword>
<keyword id="KW-0418">Kinase</keyword>
<keyword id="KW-0472">Membrane</keyword>
<keyword id="KW-0598">Phosphotransferase system</keyword>
<keyword id="KW-1185">Reference proteome</keyword>
<keyword id="KW-0762">Sugar transport</keyword>
<keyword id="KW-0808">Transferase</keyword>
<keyword id="KW-0812">Transmembrane</keyword>
<keyword id="KW-1133">Transmembrane helix</keyword>
<keyword id="KW-0813">Transport</keyword>
<feature type="chain" id="PRO_0000351401" description="PTS system glucose-specific EIICBA component">
    <location>
        <begin position="1"/>
        <end position="675"/>
    </location>
</feature>
<feature type="transmembrane region" description="Helical" evidence="3">
    <location>
        <begin position="16"/>
        <end position="36"/>
    </location>
</feature>
<feature type="transmembrane region" description="Helical" evidence="3">
    <location>
        <begin position="63"/>
        <end position="83"/>
    </location>
</feature>
<feature type="transmembrane region" description="Helical" evidence="3">
    <location>
        <begin position="89"/>
        <end position="109"/>
    </location>
</feature>
<feature type="transmembrane region" description="Helical" evidence="3">
    <location>
        <begin position="126"/>
        <end position="146"/>
    </location>
</feature>
<feature type="transmembrane region" description="Helical" evidence="3">
    <location>
        <begin position="170"/>
        <end position="190"/>
    </location>
</feature>
<feature type="transmembrane region" description="Helical" evidence="3">
    <location>
        <begin position="199"/>
        <end position="219"/>
    </location>
</feature>
<feature type="transmembrane region" description="Helical" evidence="3">
    <location>
        <begin position="273"/>
        <end position="293"/>
    </location>
</feature>
<feature type="transmembrane region" description="Helical" evidence="3">
    <location>
        <begin position="303"/>
        <end position="323"/>
    </location>
</feature>
<feature type="transmembrane region" description="Helical" evidence="3">
    <location>
        <begin position="329"/>
        <end position="349"/>
    </location>
</feature>
<feature type="transmembrane region" description="Helical" evidence="3">
    <location>
        <begin position="355"/>
        <end position="375"/>
    </location>
</feature>
<feature type="transmembrane region" description="Helical" evidence="3">
    <location>
        <begin position="383"/>
        <end position="403"/>
    </location>
</feature>
<feature type="domain" description="PTS EIIC type-1" evidence="3">
    <location>
        <begin position="3"/>
        <end position="414"/>
    </location>
</feature>
<feature type="domain" description="PTS EIIB type-1" evidence="2">
    <location>
        <begin position="425"/>
        <end position="506"/>
    </location>
</feature>
<feature type="domain" description="PTS EIIA type-1" evidence="1">
    <location>
        <begin position="547"/>
        <end position="651"/>
    </location>
</feature>
<feature type="active site" description="Phosphocysteine intermediate; for EIIB activity" evidence="2">
    <location>
        <position position="447"/>
    </location>
</feature>
<feature type="active site" description="Tele-phosphohistidine intermediate; for EIIA activity" evidence="1">
    <location>
        <position position="599"/>
    </location>
</feature>
<protein>
    <recommendedName>
        <fullName evidence="6">PTS system glucose-specific EIICBA component</fullName>
        <ecNumber evidence="8">2.7.1.199</ecNumber>
    </recommendedName>
    <alternativeName>
        <fullName evidence="6">EIICBA-Glc</fullName>
        <shortName evidence="6">EII-Glc</shortName>
    </alternativeName>
    <alternativeName>
        <fullName evidence="7">EIICBA-Glc 1</fullName>
    </alternativeName>
    <domain>
        <recommendedName>
            <fullName evidence="6">Glucose permease IIC component</fullName>
        </recommendedName>
        <alternativeName>
            <fullName evidence="6">PTS system glucose-specific EIIC component</fullName>
        </alternativeName>
    </domain>
    <domain>
        <recommendedName>
            <fullName evidence="6">Glucose-specific phosphotransferase enzyme IIB component</fullName>
        </recommendedName>
        <alternativeName>
            <fullName evidence="6">PTS system glucose-specific EIIB component</fullName>
        </alternativeName>
    </domain>
    <domain>
        <recommendedName>
            <fullName evidence="6">Glucose-specific phosphotransferase enzyme IIA component</fullName>
        </recommendedName>
        <alternativeName>
            <fullName evidence="6">PTS system glucose-specific EIIA component</fullName>
        </alternativeName>
    </domain>
</protein>
<sequence>MWKKFFGQLQRIGKALMLPVAILPAAGLLLALGNAFQGDALQSLMPFIKAEGFQNVAKMMEGAGGIIFDNLAIIFALGVAIGLASGDGVAAIAAFVGFIVLNKTMGMFLGVTPEKAADAATGFANVLGIPTLQTGVFGGIIIGALAAWCYNKFYNISLPSYLGFFAGKRFVPIMMATCSFILAFPMAIIWPSIQGGLNAFSEGLLASNTGLAVFLFGFIKRLLIPFGLHHIFHAPFWFEFGSYKNAAGQIIHGDQRIFIEQIRDNVPLTAGKFMQGEFPVMMFGLPAAALAIYQTAKKENKKVVAGLMLSGALTSFLTGITEPLEFSFLFVAPLLFFIHAVLDGLSFLILYLLDLHLGYTFSGGFIDFFLLGILPNKTQWWLVIPVGLVYAAIYYIIFRFLIVKFNFKTPGREDKEVKSSNVAASELPFKVLDAMGGKANIKHLDACITRLRVEVNDKAKVDVQELKDLGASGVLEVGNNMQAIFGPKSDQIKHDMQQIMDGKITSPEETTVTEEGDKETAEIAAAGGGVVYAPIKGEVVDISEVPDKVFSEKMMGDGIAIKPETGEVVAPFDGVVKMVFPTKHAIGLESKDGIELLIHFGLETVKLEGKGFDILVKENDNIVLGQPLMKVDLDYIKEHADSTITPIVVTNLNGRTMEVLQHGEVKQGDKVILVK</sequence>
<accession>Q57071</accession>
<accession>B9DP62</accession>
<organism>
    <name type="scientific">Staphylococcus carnosus (strain TM300)</name>
    <dbReference type="NCBI Taxonomy" id="396513"/>
    <lineage>
        <taxon>Bacteria</taxon>
        <taxon>Bacillati</taxon>
        <taxon>Bacillota</taxon>
        <taxon>Bacilli</taxon>
        <taxon>Bacillales</taxon>
        <taxon>Staphylococcaceae</taxon>
        <taxon>Staphylococcus</taxon>
    </lineage>
</organism>
<comment type="function">
    <text evidence="4">The phosphoenolpyruvate-dependent sugar phosphotransferase system (sugar PTS), a major carbohydrate active transport system, catalyzes the phosphorylation of incoming sugar substrates concomitantly with their translocation across the cell membrane. This system is involved in glucose transport. Cannot transport galactose, fructose, mannose, cellobiose, sucrose, maltose, lactose, melibiose and trehalose, as well as N-acetylglucosamine.</text>
</comment>
<comment type="catalytic activity">
    <reaction evidence="8">
        <text>N(pros)-phospho-L-histidyl-[protein] + D-glucose(out) = D-glucose 6-phosphate(in) + L-histidyl-[protein]</text>
        <dbReference type="Rhea" id="RHEA:33367"/>
        <dbReference type="Rhea" id="RHEA-COMP:9745"/>
        <dbReference type="Rhea" id="RHEA-COMP:9746"/>
        <dbReference type="ChEBI" id="CHEBI:4167"/>
        <dbReference type="ChEBI" id="CHEBI:29979"/>
        <dbReference type="ChEBI" id="CHEBI:61548"/>
        <dbReference type="ChEBI" id="CHEBI:64837"/>
        <dbReference type="EC" id="2.7.1.199"/>
    </reaction>
</comment>
<comment type="activity regulation">
    <text evidence="4">Inhibited by 2-deoxyglucose and methyl beta-D-glucoside, but not by methyl alpha-D-glucoside, p-nitrophenyl alpha-D-glucoside, o-nitrophenyl beta-D-glucoside and salicin.</text>
</comment>
<comment type="biophysicochemical properties">
    <kinetics>
        <KM evidence="4">12 uM for glucose</KM>
        <KM evidence="4">30.5 uM for glucose (in the presence of Triton X-100)</KM>
    </kinetics>
</comment>
<comment type="subcellular location">
    <subcellularLocation>
        <location evidence="3 4">Cell membrane</location>
        <topology evidence="3 4">Multi-pass membrane protein</topology>
    </subcellularLocation>
</comment>
<comment type="induction">
    <text evidence="5">Up-regulated by the antiterminator protein GlcT.</text>
</comment>
<comment type="domain">
    <text evidence="3">The EIIC domain forms the PTS system translocation channel and contains the specific substrate-binding site.</text>
</comment>
<comment type="domain">
    <text evidence="2">The EIIB domain is phosphorylated by phospho-EIIA on a cysteinyl or histidyl residue, depending on the transported sugar. Then, it transfers the phosphoryl group to the sugar substrate concomitantly with the sugar uptake processed by the EIIC domain.</text>
</comment>
<comment type="domain">
    <text evidence="1">The EIIA domain is phosphorylated by phospho-HPr on a histidyl residue. Then, it transfers the phosphoryl group to the EIIB domain.</text>
</comment>
<dbReference type="EC" id="2.7.1.199" evidence="8"/>
<dbReference type="EMBL" id="X93360">
    <property type="protein sequence ID" value="CAA63742.1"/>
    <property type="molecule type" value="Genomic_DNA"/>
</dbReference>
<dbReference type="EMBL" id="AM295250">
    <property type="protein sequence ID" value="CAL27907.1"/>
    <property type="molecule type" value="Genomic_DNA"/>
</dbReference>
<dbReference type="PIR" id="S46952">
    <property type="entry name" value="S46952"/>
</dbReference>
<dbReference type="RefSeq" id="WP_015900248.1">
    <property type="nucleotide sequence ID" value="NC_012121.1"/>
</dbReference>
<dbReference type="SMR" id="Q57071"/>
<dbReference type="TCDB" id="4.A.1.1.13">
    <property type="family name" value="the pts glucose-glucoside (glc) family"/>
</dbReference>
<dbReference type="GeneID" id="93793425"/>
<dbReference type="KEGG" id="sca:SCA_0999"/>
<dbReference type="eggNOG" id="COG1263">
    <property type="taxonomic scope" value="Bacteria"/>
</dbReference>
<dbReference type="eggNOG" id="COG1264">
    <property type="taxonomic scope" value="Bacteria"/>
</dbReference>
<dbReference type="eggNOG" id="COG2190">
    <property type="taxonomic scope" value="Bacteria"/>
</dbReference>
<dbReference type="HOGENOM" id="CLU_012312_1_1_9"/>
<dbReference type="OrthoDB" id="9764327at2"/>
<dbReference type="BioCyc" id="SCAR396513:SCA_RS05015-MONOMER"/>
<dbReference type="Proteomes" id="UP000000444">
    <property type="component" value="Chromosome"/>
</dbReference>
<dbReference type="GO" id="GO:0005886">
    <property type="term" value="C:plasma membrane"/>
    <property type="evidence" value="ECO:0007669"/>
    <property type="project" value="UniProtKB-SubCell"/>
</dbReference>
<dbReference type="GO" id="GO:0055056">
    <property type="term" value="F:D-glucose transmembrane transporter activity"/>
    <property type="evidence" value="ECO:0007669"/>
    <property type="project" value="InterPro"/>
</dbReference>
<dbReference type="GO" id="GO:0016301">
    <property type="term" value="F:kinase activity"/>
    <property type="evidence" value="ECO:0007669"/>
    <property type="project" value="UniProtKB-KW"/>
</dbReference>
<dbReference type="GO" id="GO:0008982">
    <property type="term" value="F:protein-N(PI)-phosphohistidine-sugar phosphotransferase activity"/>
    <property type="evidence" value="ECO:0007669"/>
    <property type="project" value="InterPro"/>
</dbReference>
<dbReference type="GO" id="GO:0090563">
    <property type="term" value="F:protein-phosphocysteine-sugar phosphotransferase activity"/>
    <property type="evidence" value="ECO:0007669"/>
    <property type="project" value="TreeGrafter"/>
</dbReference>
<dbReference type="GO" id="GO:1904659">
    <property type="term" value="P:D-glucose transmembrane transport"/>
    <property type="evidence" value="ECO:0007669"/>
    <property type="project" value="InterPro"/>
</dbReference>
<dbReference type="GO" id="GO:0009401">
    <property type="term" value="P:phosphoenolpyruvate-dependent sugar phosphotransferase system"/>
    <property type="evidence" value="ECO:0007669"/>
    <property type="project" value="UniProtKB-KW"/>
</dbReference>
<dbReference type="CDD" id="cd00212">
    <property type="entry name" value="PTS_IIB_glc"/>
    <property type="match status" value="1"/>
</dbReference>
<dbReference type="FunFam" id="2.70.70.10:FF:000001">
    <property type="entry name" value="PTS system glucose-specific IIA component"/>
    <property type="match status" value="1"/>
</dbReference>
<dbReference type="FunFam" id="3.30.1360.60:FF:000001">
    <property type="entry name" value="PTS system glucose-specific IIBC component PtsG"/>
    <property type="match status" value="1"/>
</dbReference>
<dbReference type="Gene3D" id="2.70.70.10">
    <property type="entry name" value="Glucose Permease (Domain IIA)"/>
    <property type="match status" value="1"/>
</dbReference>
<dbReference type="Gene3D" id="3.30.1360.60">
    <property type="entry name" value="Glucose permease domain IIB"/>
    <property type="match status" value="1"/>
</dbReference>
<dbReference type="InterPro" id="IPR011055">
    <property type="entry name" value="Dup_hybrid_motif"/>
</dbReference>
<dbReference type="InterPro" id="IPR036878">
    <property type="entry name" value="Glu_permease_IIB"/>
</dbReference>
<dbReference type="InterPro" id="IPR018113">
    <property type="entry name" value="PTrfase_EIIB_Cys"/>
</dbReference>
<dbReference type="InterPro" id="IPR001127">
    <property type="entry name" value="PTS_EIIA_1_perm"/>
</dbReference>
<dbReference type="InterPro" id="IPR003352">
    <property type="entry name" value="PTS_EIIC"/>
</dbReference>
<dbReference type="InterPro" id="IPR013013">
    <property type="entry name" value="PTS_EIIC_1"/>
</dbReference>
<dbReference type="InterPro" id="IPR050429">
    <property type="entry name" value="PTS_Glucose_EIICBA"/>
</dbReference>
<dbReference type="InterPro" id="IPR001996">
    <property type="entry name" value="PTS_IIB_1"/>
</dbReference>
<dbReference type="InterPro" id="IPR011299">
    <property type="entry name" value="PTS_IIBC_glc"/>
</dbReference>
<dbReference type="NCBIfam" id="TIGR00826">
    <property type="entry name" value="EIIB_glc"/>
    <property type="match status" value="1"/>
</dbReference>
<dbReference type="NCBIfam" id="TIGR00830">
    <property type="entry name" value="PTBA"/>
    <property type="match status" value="1"/>
</dbReference>
<dbReference type="NCBIfam" id="TIGR02002">
    <property type="entry name" value="PTS-II-BC-glcB"/>
    <property type="match status" value="1"/>
</dbReference>
<dbReference type="PANTHER" id="PTHR30009">
    <property type="entry name" value="CYTOCHROME C-TYPE SYNTHESIS PROTEIN AND PTS TRANSMEMBRANE COMPONENT"/>
    <property type="match status" value="1"/>
</dbReference>
<dbReference type="PANTHER" id="PTHR30009:SF20">
    <property type="entry name" value="PTS SYSTEM GLUCOSE-SPECIFIC EIICB COMPONENT-RELATED"/>
    <property type="match status" value="1"/>
</dbReference>
<dbReference type="Pfam" id="PF00358">
    <property type="entry name" value="PTS_EIIA_1"/>
    <property type="match status" value="1"/>
</dbReference>
<dbReference type="Pfam" id="PF00367">
    <property type="entry name" value="PTS_EIIB"/>
    <property type="match status" value="1"/>
</dbReference>
<dbReference type="Pfam" id="PF02378">
    <property type="entry name" value="PTS_EIIC"/>
    <property type="match status" value="1"/>
</dbReference>
<dbReference type="SUPFAM" id="SSF51261">
    <property type="entry name" value="Duplicated hybrid motif"/>
    <property type="match status" value="1"/>
</dbReference>
<dbReference type="SUPFAM" id="SSF55604">
    <property type="entry name" value="Glucose permease domain IIB"/>
    <property type="match status" value="1"/>
</dbReference>
<dbReference type="PROSITE" id="PS51093">
    <property type="entry name" value="PTS_EIIA_TYPE_1"/>
    <property type="match status" value="1"/>
</dbReference>
<dbReference type="PROSITE" id="PS00371">
    <property type="entry name" value="PTS_EIIA_TYPE_1_HIS"/>
    <property type="match status" value="1"/>
</dbReference>
<dbReference type="PROSITE" id="PS51098">
    <property type="entry name" value="PTS_EIIB_TYPE_1"/>
    <property type="match status" value="1"/>
</dbReference>
<dbReference type="PROSITE" id="PS01035">
    <property type="entry name" value="PTS_EIIB_TYPE_1_CYS"/>
    <property type="match status" value="1"/>
</dbReference>
<dbReference type="PROSITE" id="PS51103">
    <property type="entry name" value="PTS_EIIC_TYPE_1"/>
    <property type="match status" value="1"/>
</dbReference>
<gene>
    <name type="primary">ptsG</name>
    <name evidence="6" type="synonym">glcA</name>
    <name type="ordered locus">Sca_0999</name>
</gene>
<name>PTG3C_STACT</name>
<proteinExistence type="evidence at protein level"/>
<reference key="1">
    <citation type="journal article" date="1996" name="Mol. Gen. Genet.">
        <title>Cloning and sequencing of two genes from Staphylococcus carnosus coding for glucose-specific PTS and their expression in Escherichia coli K-12.</title>
        <authorList>
            <person name="Christiansen I."/>
            <person name="Hengstenberg W."/>
        </authorList>
    </citation>
    <scope>NUCLEOTIDE SEQUENCE [GENOMIC DNA]</scope>
</reference>
<reference key="2">
    <citation type="journal article" date="2009" name="Appl. Environ. Microbiol.">
        <title>Genome analysis of the meat starter culture bacterium Staphylococcus carnosus TM300.</title>
        <authorList>
            <person name="Rosenstein R."/>
            <person name="Nerz C."/>
            <person name="Biswas L."/>
            <person name="Resch A."/>
            <person name="Raddatz G."/>
            <person name="Schuster S.C."/>
            <person name="Goetz F."/>
        </authorList>
    </citation>
    <scope>NUCLEOTIDE SEQUENCE [LARGE SCALE GENOMIC DNA]</scope>
    <source>
        <strain>TM300</strain>
    </source>
</reference>
<reference key="3">
    <citation type="journal article" date="1999" name="Microbiology">
        <title>Staphylococcal phosphoenolpyruvate-dependent phosphotransferase system -- two highly similar glucose permeases in Staphylococcus carnosus with different glucoside specificity: protein engineering in vivo?</title>
        <authorList>
            <person name="Christiansen I."/>
            <person name="Hengstenberg W."/>
        </authorList>
    </citation>
    <scope>PROTEIN SEQUENCE OF N-TERMINUS</scope>
    <scope>FUNCTION</scope>
    <scope>CATALYTIC ACTIVITY</scope>
    <scope>SUBSTRATE SPECIFICITY</scope>
    <scope>ACTIVITY REGULATION</scope>
    <scope>SUBCELLULAR LOCATION</scope>
    <scope>BIOPHYSICOCHEMICAL PROPERTIES</scope>
</reference>
<reference key="4">
    <citation type="journal article" date="2000" name="Microbiology">
        <title>Regulation of the glucose-specific phosphotransferase system (PTS) of Staphylococcus carnosus by the antiterminator protein GlcT.</title>
        <authorList>
            <person name="Knezevic I."/>
            <person name="Bachem S."/>
            <person name="Sickmann A."/>
            <person name="Meyer H.E."/>
            <person name="Stuelke J."/>
            <person name="Hengstenberg W."/>
        </authorList>
    </citation>
    <scope>INDUCTION BY GLCT</scope>
</reference>